<comment type="function">
    <text evidence="1">Part of the Tol-Pal system, which plays a role in outer membrane invagination during cell division and is important for maintaining outer membrane integrity.</text>
</comment>
<comment type="subunit">
    <text evidence="1">The Tol-Pal system is composed of five core proteins: the inner membrane proteins TolA, TolQ and TolR, the periplasmic protein TolB and the outer membrane protein Pal. They form a network linking the inner and outer membranes and the peptidoglycan layer.</text>
</comment>
<comment type="subcellular location">
    <subcellularLocation>
        <location evidence="1">Periplasm</location>
    </subcellularLocation>
</comment>
<comment type="similarity">
    <text evidence="1">Belongs to the TolB family.</text>
</comment>
<gene>
    <name evidence="1" type="primary">tolB</name>
    <name type="ordered locus">amb3211</name>
</gene>
<reference key="1">
    <citation type="journal article" date="2005" name="DNA Res.">
        <title>Complete genome sequence of the facultative anaerobic magnetotactic bacterium Magnetospirillum sp. strain AMB-1.</title>
        <authorList>
            <person name="Matsunaga T."/>
            <person name="Okamura Y."/>
            <person name="Fukuda Y."/>
            <person name="Wahyudi A.T."/>
            <person name="Murase Y."/>
            <person name="Takeyama H."/>
        </authorList>
    </citation>
    <scope>NUCLEOTIDE SEQUENCE [LARGE SCALE GENOMIC DNA]</scope>
    <source>
        <strain>ATCC 700264 / AMB-1</strain>
    </source>
</reference>
<sequence>MITMSRIRSLAAFAVFVILGVAAVLPAQAEVRIDITRGQMKPLPIAIPDFAGASAQDNRMGADIARVVSADLERSGLFKPIDPKAFIQNAASLQAGPRFPDWKAINAEALVSGKIESGADGRVRVEFRLWDVFNEAYMTGWTLSASPQDWRRLSHKVADAIYKRVTGEDGYFDTQIVYIAESGPKNDRKKRLSIMDQDGENHRFLTDGSELVLTPRFSPSAREITYLSYFKGVPRVYIFNLDTGRRESLGNFPGMTFAPRFSPDGNKVVFSMAENGNTEIYEMNLLTRQKRQLTMNPAIDTAPSYSPDGQQIVFESDRGGGQQIYTMSADGSNPQRISFGDGRYGTPVWSPRGDLIAFTKQKGGQFFIGVMRTDGSGERLLAEGFLVEGPTWAPNGRVLSFFRESPSDERGRGQVVRLYTIDLTGVNERVLLTPVDGSDPAWSPLIP</sequence>
<dbReference type="EMBL" id="AP007255">
    <property type="protein sequence ID" value="BAE52015.1"/>
    <property type="molecule type" value="Genomic_DNA"/>
</dbReference>
<dbReference type="RefSeq" id="WP_011385576.1">
    <property type="nucleotide sequence ID" value="NC_007626.1"/>
</dbReference>
<dbReference type="SMR" id="Q2W2B0"/>
<dbReference type="STRING" id="342108.amb3211"/>
<dbReference type="KEGG" id="mag:amb3211"/>
<dbReference type="HOGENOM" id="CLU_047123_0_0_5"/>
<dbReference type="OrthoDB" id="9802240at2"/>
<dbReference type="Proteomes" id="UP000007058">
    <property type="component" value="Chromosome"/>
</dbReference>
<dbReference type="GO" id="GO:0042597">
    <property type="term" value="C:periplasmic space"/>
    <property type="evidence" value="ECO:0007669"/>
    <property type="project" value="UniProtKB-SubCell"/>
</dbReference>
<dbReference type="GO" id="GO:0051301">
    <property type="term" value="P:cell division"/>
    <property type="evidence" value="ECO:0007669"/>
    <property type="project" value="UniProtKB-UniRule"/>
</dbReference>
<dbReference type="GO" id="GO:0017038">
    <property type="term" value="P:protein import"/>
    <property type="evidence" value="ECO:0007669"/>
    <property type="project" value="InterPro"/>
</dbReference>
<dbReference type="Gene3D" id="2.120.10.30">
    <property type="entry name" value="TolB, C-terminal domain"/>
    <property type="match status" value="1"/>
</dbReference>
<dbReference type="Gene3D" id="3.40.50.10070">
    <property type="entry name" value="TolB, N-terminal domain"/>
    <property type="match status" value="1"/>
</dbReference>
<dbReference type="HAMAP" id="MF_00671">
    <property type="entry name" value="TolB"/>
    <property type="match status" value="1"/>
</dbReference>
<dbReference type="InterPro" id="IPR011042">
    <property type="entry name" value="6-blade_b-propeller_TolB-like"/>
</dbReference>
<dbReference type="InterPro" id="IPR011659">
    <property type="entry name" value="PD40"/>
</dbReference>
<dbReference type="InterPro" id="IPR014167">
    <property type="entry name" value="Tol-Pal_TolB"/>
</dbReference>
<dbReference type="InterPro" id="IPR007195">
    <property type="entry name" value="TolB_N"/>
</dbReference>
<dbReference type="NCBIfam" id="TIGR02800">
    <property type="entry name" value="propeller_TolB"/>
    <property type="match status" value="1"/>
</dbReference>
<dbReference type="PANTHER" id="PTHR36842:SF1">
    <property type="entry name" value="PROTEIN TOLB"/>
    <property type="match status" value="1"/>
</dbReference>
<dbReference type="PANTHER" id="PTHR36842">
    <property type="entry name" value="PROTEIN TOLB HOMOLOG"/>
    <property type="match status" value="1"/>
</dbReference>
<dbReference type="Pfam" id="PF07676">
    <property type="entry name" value="PD40"/>
    <property type="match status" value="2"/>
</dbReference>
<dbReference type="Pfam" id="PF04052">
    <property type="entry name" value="TolB_N"/>
    <property type="match status" value="1"/>
</dbReference>
<dbReference type="SUPFAM" id="SSF52964">
    <property type="entry name" value="TolB, N-terminal domain"/>
    <property type="match status" value="1"/>
</dbReference>
<dbReference type="SUPFAM" id="SSF69304">
    <property type="entry name" value="Tricorn protease N-terminal domain"/>
    <property type="match status" value="1"/>
</dbReference>
<protein>
    <recommendedName>
        <fullName evidence="1">Tol-Pal system protein TolB</fullName>
    </recommendedName>
</protein>
<evidence type="ECO:0000255" key="1">
    <source>
        <dbReference type="HAMAP-Rule" id="MF_00671"/>
    </source>
</evidence>
<keyword id="KW-0131">Cell cycle</keyword>
<keyword id="KW-0132">Cell division</keyword>
<keyword id="KW-0574">Periplasm</keyword>
<keyword id="KW-0732">Signal</keyword>
<proteinExistence type="inferred from homology"/>
<accession>Q2W2B0</accession>
<organism>
    <name type="scientific">Paramagnetospirillum magneticum (strain ATCC 700264 / AMB-1)</name>
    <name type="common">Magnetospirillum magneticum</name>
    <dbReference type="NCBI Taxonomy" id="342108"/>
    <lineage>
        <taxon>Bacteria</taxon>
        <taxon>Pseudomonadati</taxon>
        <taxon>Pseudomonadota</taxon>
        <taxon>Alphaproteobacteria</taxon>
        <taxon>Rhodospirillales</taxon>
        <taxon>Magnetospirillaceae</taxon>
        <taxon>Paramagnetospirillum</taxon>
    </lineage>
</organism>
<name>TOLB_PARM1</name>
<feature type="signal peptide" evidence="1">
    <location>
        <begin position="1"/>
        <end position="29"/>
    </location>
</feature>
<feature type="chain" id="PRO_0000259055" description="Tol-Pal system protein TolB" evidence="1">
    <location>
        <begin position="30"/>
        <end position="447"/>
    </location>
</feature>